<comment type="function">
    <text evidence="1">Catalyzes the phosphorylation of the hydroxyl group of 4-methyl-5-beta-hydroxyethylthiazole (THZ).</text>
</comment>
<comment type="catalytic activity">
    <reaction evidence="1">
        <text>5-(2-hydroxyethyl)-4-methylthiazole + ATP = 4-methyl-5-(2-phosphooxyethyl)-thiazole + ADP + H(+)</text>
        <dbReference type="Rhea" id="RHEA:24212"/>
        <dbReference type="ChEBI" id="CHEBI:15378"/>
        <dbReference type="ChEBI" id="CHEBI:17957"/>
        <dbReference type="ChEBI" id="CHEBI:30616"/>
        <dbReference type="ChEBI" id="CHEBI:58296"/>
        <dbReference type="ChEBI" id="CHEBI:456216"/>
        <dbReference type="EC" id="2.7.1.50"/>
    </reaction>
</comment>
<comment type="cofactor">
    <cofactor evidence="1">
        <name>Mg(2+)</name>
        <dbReference type="ChEBI" id="CHEBI:18420"/>
    </cofactor>
</comment>
<comment type="pathway">
    <text evidence="1">Cofactor biosynthesis; thiamine diphosphate biosynthesis; 4-methyl-5-(2-phosphoethyl)-thiazole from 5-(2-hydroxyethyl)-4-methylthiazole: step 1/1.</text>
</comment>
<comment type="similarity">
    <text evidence="1">Belongs to the Thz kinase family.</text>
</comment>
<keyword id="KW-0067">ATP-binding</keyword>
<keyword id="KW-0418">Kinase</keyword>
<keyword id="KW-0460">Magnesium</keyword>
<keyword id="KW-0479">Metal-binding</keyword>
<keyword id="KW-0547">Nucleotide-binding</keyword>
<keyword id="KW-0614">Plasmid</keyword>
<keyword id="KW-0784">Thiamine biosynthesis</keyword>
<keyword id="KW-0808">Transferase</keyword>
<geneLocation type="plasmid">
    <name>pRL11</name>
</geneLocation>
<protein>
    <recommendedName>
        <fullName evidence="1">Hydroxyethylthiazole kinase</fullName>
        <ecNumber evidence="1">2.7.1.50</ecNumber>
    </recommendedName>
    <alternativeName>
        <fullName evidence="1">4-methyl-5-beta-hydroxyethylthiazole kinase</fullName>
        <shortName evidence="1">TH kinase</shortName>
        <shortName evidence="1">Thz kinase</shortName>
    </alternativeName>
</protein>
<accession>Q1M5U3</accession>
<sequence>MQTRTTPGAMLKAMREKPPLVQCITNYVAMNIAANVLLAAGASPAMVHAAEEAGEFAAIASALTINIGTLSTQWIDGMQAAAKAATSAGKPWVLDPVAHYATAFRRNAVAELLALKPTIIRGNASEIIALAGGESRGQGVDSRDPVEQAEGSARWLAERQRAVVAVTGAVDFVTDGERAVRIEGGSALMPQVTALGCSLTCLVGAFAATAPEDIFGATVAALSTFAIAGEEAALGAAGPGSFSWRFLDALAALDAETLDARARISAA</sequence>
<evidence type="ECO:0000255" key="1">
    <source>
        <dbReference type="HAMAP-Rule" id="MF_00228"/>
    </source>
</evidence>
<feature type="chain" id="PRO_0000383892" description="Hydroxyethylthiazole kinase">
    <location>
        <begin position="1"/>
        <end position="267"/>
    </location>
</feature>
<feature type="binding site" evidence="1">
    <location>
        <position position="46"/>
    </location>
    <ligand>
        <name>substrate</name>
    </ligand>
</feature>
<feature type="binding site" evidence="1">
    <location>
        <position position="121"/>
    </location>
    <ligand>
        <name>ATP</name>
        <dbReference type="ChEBI" id="CHEBI:30616"/>
    </ligand>
</feature>
<feature type="binding site" evidence="1">
    <location>
        <position position="167"/>
    </location>
    <ligand>
        <name>ATP</name>
        <dbReference type="ChEBI" id="CHEBI:30616"/>
    </ligand>
</feature>
<feature type="binding site" evidence="1">
    <location>
        <position position="194"/>
    </location>
    <ligand>
        <name>substrate</name>
    </ligand>
</feature>
<organism>
    <name type="scientific">Rhizobium johnstonii (strain DSM 114642 / LMG 32736 / 3841)</name>
    <name type="common">Rhizobium leguminosarum bv. viciae</name>
    <dbReference type="NCBI Taxonomy" id="216596"/>
    <lineage>
        <taxon>Bacteria</taxon>
        <taxon>Pseudomonadati</taxon>
        <taxon>Pseudomonadota</taxon>
        <taxon>Alphaproteobacteria</taxon>
        <taxon>Hyphomicrobiales</taxon>
        <taxon>Rhizobiaceae</taxon>
        <taxon>Rhizobium/Agrobacterium group</taxon>
        <taxon>Rhizobium</taxon>
        <taxon>Rhizobium johnstonii</taxon>
    </lineage>
</organism>
<proteinExistence type="inferred from homology"/>
<gene>
    <name evidence="1" type="primary">thiM</name>
    <name type="ordered locus">pRL110443</name>
</gene>
<dbReference type="EC" id="2.7.1.50" evidence="1"/>
<dbReference type="EMBL" id="AM236085">
    <property type="protein sequence ID" value="CAK03396.1"/>
    <property type="molecule type" value="Genomic_DNA"/>
</dbReference>
<dbReference type="RefSeq" id="WP_011655179.1">
    <property type="nucleotide sequence ID" value="NC_008384.1"/>
</dbReference>
<dbReference type="SMR" id="Q1M5U3"/>
<dbReference type="EnsemblBacteria" id="CAK03396">
    <property type="protein sequence ID" value="CAK03396"/>
    <property type="gene ID" value="pRL110443"/>
</dbReference>
<dbReference type="KEGG" id="rle:pRL110443"/>
<dbReference type="HOGENOM" id="CLU_019943_0_1_5"/>
<dbReference type="UniPathway" id="UPA00060">
    <property type="reaction ID" value="UER00139"/>
</dbReference>
<dbReference type="Proteomes" id="UP000006575">
    <property type="component" value="Plasmid pRL11"/>
</dbReference>
<dbReference type="GO" id="GO:0005524">
    <property type="term" value="F:ATP binding"/>
    <property type="evidence" value="ECO:0007669"/>
    <property type="project" value="UniProtKB-UniRule"/>
</dbReference>
<dbReference type="GO" id="GO:0004417">
    <property type="term" value="F:hydroxyethylthiazole kinase activity"/>
    <property type="evidence" value="ECO:0007669"/>
    <property type="project" value="UniProtKB-UniRule"/>
</dbReference>
<dbReference type="GO" id="GO:0000287">
    <property type="term" value="F:magnesium ion binding"/>
    <property type="evidence" value="ECO:0007669"/>
    <property type="project" value="UniProtKB-UniRule"/>
</dbReference>
<dbReference type="GO" id="GO:0009228">
    <property type="term" value="P:thiamine biosynthetic process"/>
    <property type="evidence" value="ECO:0007669"/>
    <property type="project" value="UniProtKB-KW"/>
</dbReference>
<dbReference type="GO" id="GO:0009229">
    <property type="term" value="P:thiamine diphosphate biosynthetic process"/>
    <property type="evidence" value="ECO:0007669"/>
    <property type="project" value="UniProtKB-UniRule"/>
</dbReference>
<dbReference type="CDD" id="cd01170">
    <property type="entry name" value="THZ_kinase"/>
    <property type="match status" value="1"/>
</dbReference>
<dbReference type="Gene3D" id="3.40.1190.20">
    <property type="match status" value="1"/>
</dbReference>
<dbReference type="HAMAP" id="MF_00228">
    <property type="entry name" value="Thz_kinase"/>
    <property type="match status" value="1"/>
</dbReference>
<dbReference type="InterPro" id="IPR000417">
    <property type="entry name" value="Hyethyz_kinase"/>
</dbReference>
<dbReference type="InterPro" id="IPR029056">
    <property type="entry name" value="Ribokinase-like"/>
</dbReference>
<dbReference type="NCBIfam" id="NF006830">
    <property type="entry name" value="PRK09355.1"/>
    <property type="match status" value="1"/>
</dbReference>
<dbReference type="NCBIfam" id="TIGR00694">
    <property type="entry name" value="thiM"/>
    <property type="match status" value="1"/>
</dbReference>
<dbReference type="Pfam" id="PF02110">
    <property type="entry name" value="HK"/>
    <property type="match status" value="1"/>
</dbReference>
<dbReference type="PIRSF" id="PIRSF000513">
    <property type="entry name" value="Thz_kinase"/>
    <property type="match status" value="1"/>
</dbReference>
<dbReference type="PRINTS" id="PR01099">
    <property type="entry name" value="HYETHTZKNASE"/>
</dbReference>
<dbReference type="SUPFAM" id="SSF53613">
    <property type="entry name" value="Ribokinase-like"/>
    <property type="match status" value="1"/>
</dbReference>
<name>THIM_RHIJ3</name>
<reference key="1">
    <citation type="journal article" date="2006" name="Genome Biol.">
        <title>The genome of Rhizobium leguminosarum has recognizable core and accessory components.</title>
        <authorList>
            <person name="Young J.P.W."/>
            <person name="Crossman L.C."/>
            <person name="Johnston A.W.B."/>
            <person name="Thomson N.R."/>
            <person name="Ghazoui Z.F."/>
            <person name="Hull K.H."/>
            <person name="Wexler M."/>
            <person name="Curson A.R.J."/>
            <person name="Todd J.D."/>
            <person name="Poole P.S."/>
            <person name="Mauchline T.H."/>
            <person name="East A.K."/>
            <person name="Quail M.A."/>
            <person name="Churcher C."/>
            <person name="Arrowsmith C."/>
            <person name="Cherevach I."/>
            <person name="Chillingworth T."/>
            <person name="Clarke K."/>
            <person name="Cronin A."/>
            <person name="Davis P."/>
            <person name="Fraser A."/>
            <person name="Hance Z."/>
            <person name="Hauser H."/>
            <person name="Jagels K."/>
            <person name="Moule S."/>
            <person name="Mungall K."/>
            <person name="Norbertczak H."/>
            <person name="Rabbinowitsch E."/>
            <person name="Sanders M."/>
            <person name="Simmonds M."/>
            <person name="Whitehead S."/>
            <person name="Parkhill J."/>
        </authorList>
    </citation>
    <scope>NUCLEOTIDE SEQUENCE [LARGE SCALE GENOMIC DNA]</scope>
    <source>
        <strain>DSM 114642 / LMG 32736 / 3841</strain>
    </source>
</reference>